<name>FBPAP_METS5</name>
<dbReference type="EC" id="3.1.3.11" evidence="4"/>
<dbReference type="EC" id="4.1.2.13" evidence="4"/>
<dbReference type="EMBL" id="CP000682">
    <property type="protein sequence ID" value="ABP96397.1"/>
    <property type="molecule type" value="Genomic_DNA"/>
</dbReference>
<dbReference type="RefSeq" id="WP_012022184.1">
    <property type="nucleotide sequence ID" value="NC_009440.1"/>
</dbReference>
<dbReference type="SMR" id="A4YIZ5"/>
<dbReference type="STRING" id="399549.Msed_2259"/>
<dbReference type="GeneID" id="91756809"/>
<dbReference type="KEGG" id="mse:Msed_2259"/>
<dbReference type="eggNOG" id="arCOG04180">
    <property type="taxonomic scope" value="Archaea"/>
</dbReference>
<dbReference type="HOGENOM" id="CLU_041630_0_0_2"/>
<dbReference type="UniPathway" id="UPA00138"/>
<dbReference type="Proteomes" id="UP000000242">
    <property type="component" value="Chromosome"/>
</dbReference>
<dbReference type="GO" id="GO:0042132">
    <property type="term" value="F:fructose 1,6-bisphosphate 1-phosphatase activity"/>
    <property type="evidence" value="ECO:0007669"/>
    <property type="project" value="UniProtKB-UniRule"/>
</dbReference>
<dbReference type="GO" id="GO:0004332">
    <property type="term" value="F:fructose-bisphosphate aldolase activity"/>
    <property type="evidence" value="ECO:0007669"/>
    <property type="project" value="UniProtKB-UniRule"/>
</dbReference>
<dbReference type="GO" id="GO:0000287">
    <property type="term" value="F:magnesium ion binding"/>
    <property type="evidence" value="ECO:0007669"/>
    <property type="project" value="UniProtKB-UniRule"/>
</dbReference>
<dbReference type="GO" id="GO:0006094">
    <property type="term" value="P:gluconeogenesis"/>
    <property type="evidence" value="ECO:0007669"/>
    <property type="project" value="UniProtKB-UniRule"/>
</dbReference>
<dbReference type="HAMAP" id="MF_02067">
    <property type="entry name" value="FBP_aldolase_phosphatase"/>
    <property type="match status" value="1"/>
</dbReference>
<dbReference type="InterPro" id="IPR002803">
    <property type="entry name" value="FBPase_V"/>
</dbReference>
<dbReference type="InterPro" id="IPR036076">
    <property type="entry name" value="FBPase_V_sf"/>
</dbReference>
<dbReference type="NCBIfam" id="NF041126">
    <property type="entry name" value="FBP_aldo_phos"/>
    <property type="match status" value="1"/>
</dbReference>
<dbReference type="PANTHER" id="PTHR38341">
    <property type="entry name" value="FRUCTOSE-1,6-BISPHOSPHATE ALDOLASE/PHOSPHATASE"/>
    <property type="match status" value="1"/>
</dbReference>
<dbReference type="PANTHER" id="PTHR38341:SF1">
    <property type="entry name" value="FRUCTOSE-1,6-BISPHOSPHATE ALDOLASE_PHOSPHATASE"/>
    <property type="match status" value="1"/>
</dbReference>
<dbReference type="Pfam" id="PF01950">
    <property type="entry name" value="FBPase_3"/>
    <property type="match status" value="1"/>
</dbReference>
<dbReference type="PIRSF" id="PIRSF015647">
    <property type="entry name" value="FBPtase_archl"/>
    <property type="match status" value="1"/>
</dbReference>
<dbReference type="SUPFAM" id="SSF111249">
    <property type="entry name" value="Sulfolobus fructose-1,6-bisphosphatase-like"/>
    <property type="match status" value="1"/>
</dbReference>
<proteinExistence type="evidence at protein level"/>
<feature type="chain" id="PRO_0000437181" description="Fructose-1,6-bisphosphate aldolase/phosphatase">
    <location>
        <begin position="1"/>
        <end position="383"/>
    </location>
</feature>
<feature type="region of interest" description="Disordered" evidence="3">
    <location>
        <begin position="361"/>
        <end position="383"/>
    </location>
</feature>
<feature type="compositionally biased region" description="Polar residues" evidence="3">
    <location>
        <begin position="374"/>
        <end position="383"/>
    </location>
</feature>
<feature type="active site" description="Proton acceptor; for FBP phosphatase activity" evidence="1">
    <location>
        <position position="11"/>
    </location>
</feature>
<feature type="active site" description="Proton donor/acceptor; for FBP aldolase activity" evidence="1">
    <location>
        <position position="228"/>
    </location>
</feature>
<feature type="active site" description="Schiff-base intermediate with DHAP; for FBP aldolase activity" evidence="1">
    <location>
        <position position="231"/>
    </location>
</feature>
<feature type="binding site" evidence="1">
    <location>
        <position position="11"/>
    </location>
    <ligand>
        <name>Mg(2+)</name>
        <dbReference type="ChEBI" id="CHEBI:18420"/>
        <label>1</label>
    </ligand>
</feature>
<feature type="binding site" description="in other chain" evidence="1">
    <location>
        <position position="18"/>
    </location>
    <ligand>
        <name>beta-D-fructose 1,6-bisphosphate</name>
        <dbReference type="ChEBI" id="CHEBI:32966"/>
        <note>ligand shared between dimeric partners</note>
    </ligand>
</feature>
<feature type="binding site" evidence="1">
    <location>
        <position position="18"/>
    </location>
    <ligand>
        <name>dihydroxyacetone phosphate</name>
        <dbReference type="ChEBI" id="CHEBI:57642"/>
    </ligand>
</feature>
<feature type="binding site" evidence="1">
    <location>
        <position position="18"/>
    </location>
    <ligand>
        <name>Mg(2+)</name>
        <dbReference type="ChEBI" id="CHEBI:18420"/>
        <label>1</label>
    </ligand>
</feature>
<feature type="binding site" evidence="1">
    <location>
        <position position="52"/>
    </location>
    <ligand>
        <name>Mg(2+)</name>
        <dbReference type="ChEBI" id="CHEBI:18420"/>
        <label>1</label>
    </ligand>
</feature>
<feature type="binding site" evidence="1">
    <location>
        <position position="52"/>
    </location>
    <ligand>
        <name>Mg(2+)</name>
        <dbReference type="ChEBI" id="CHEBI:18420"/>
        <label>2</label>
    </ligand>
</feature>
<feature type="binding site" evidence="1">
    <location>
        <position position="53"/>
    </location>
    <ligand>
        <name>Mg(2+)</name>
        <dbReference type="ChEBI" id="CHEBI:18420"/>
        <label>2</label>
    </ligand>
</feature>
<feature type="binding site" description="in other chain" evidence="1">
    <location>
        <position position="90"/>
    </location>
    <ligand>
        <name>beta-D-fructose 1,6-bisphosphate</name>
        <dbReference type="ChEBI" id="CHEBI:32966"/>
        <note>ligand shared between dimeric partners</note>
    </ligand>
</feature>
<feature type="binding site" evidence="1">
    <location>
        <position position="94"/>
    </location>
    <ligand>
        <name>Mg(2+)</name>
        <dbReference type="ChEBI" id="CHEBI:18420"/>
        <label>1</label>
    </ligand>
</feature>
<feature type="binding site" description="in other chain" evidence="1">
    <location>
        <begin position="103"/>
        <end position="104"/>
    </location>
    <ligand>
        <name>beta-D-fructose 1,6-bisphosphate</name>
        <dbReference type="ChEBI" id="CHEBI:32966"/>
        <note>ligand shared between dimeric partners</note>
    </ligand>
</feature>
<feature type="binding site" evidence="1">
    <location>
        <position position="131"/>
    </location>
    <ligand>
        <name>Mg(2+)</name>
        <dbReference type="ChEBI" id="CHEBI:18420"/>
        <label>2</label>
    </ligand>
</feature>
<feature type="binding site" description="in other chain" evidence="1">
    <location>
        <position position="132"/>
    </location>
    <ligand>
        <name>beta-D-fructose 1,6-bisphosphate</name>
        <dbReference type="ChEBI" id="CHEBI:32966"/>
        <note>ligand shared between dimeric partners</note>
    </ligand>
</feature>
<feature type="binding site" evidence="1">
    <location>
        <position position="132"/>
    </location>
    <ligand>
        <name>dihydroxyacetone phosphate</name>
        <dbReference type="ChEBI" id="CHEBI:57642"/>
    </ligand>
</feature>
<feature type="binding site" evidence="1">
    <location>
        <position position="231"/>
    </location>
    <ligand>
        <name>Mg(2+)</name>
        <dbReference type="ChEBI" id="CHEBI:18420"/>
        <label>3</label>
    </ligand>
</feature>
<feature type="binding site" evidence="1">
    <location>
        <position position="232"/>
    </location>
    <ligand>
        <name>Mg(2+)</name>
        <dbReference type="ChEBI" id="CHEBI:18420"/>
        <label>3</label>
    </ligand>
</feature>
<feature type="binding site" evidence="1">
    <location>
        <position position="232"/>
    </location>
    <ligand>
        <name>Mg(2+)</name>
        <dbReference type="ChEBI" id="CHEBI:18420"/>
        <label>4</label>
    </ligand>
</feature>
<feature type="binding site" evidence="1">
    <location>
        <position position="233"/>
    </location>
    <ligand>
        <name>Mg(2+)</name>
        <dbReference type="ChEBI" id="CHEBI:18420"/>
        <label>2</label>
    </ligand>
</feature>
<feature type="binding site" evidence="1">
    <location>
        <position position="233"/>
    </location>
    <ligand>
        <name>Mg(2+)</name>
        <dbReference type="ChEBI" id="CHEBI:18420"/>
        <label>3</label>
    </ligand>
</feature>
<feature type="binding site" evidence="1">
    <location>
        <begin position="241"/>
        <end position="242"/>
    </location>
    <ligand>
        <name>beta-D-fructose 1,6-bisphosphate</name>
        <dbReference type="ChEBI" id="CHEBI:32966"/>
        <note>ligand shared between dimeric partners</note>
    </ligand>
</feature>
<feature type="binding site" description="in other chain" evidence="1">
    <location>
        <position position="265"/>
    </location>
    <ligand>
        <name>beta-D-fructose 1,6-bisphosphate</name>
        <dbReference type="ChEBI" id="CHEBI:32966"/>
        <note>ligand shared between dimeric partners</note>
    </ligand>
</feature>
<feature type="binding site" evidence="1">
    <location>
        <position position="265"/>
    </location>
    <ligand>
        <name>dihydroxyacetone phosphate</name>
        <dbReference type="ChEBI" id="CHEBI:57642"/>
    </ligand>
</feature>
<feature type="binding site" description="in other chain" evidence="1">
    <location>
        <position position="286"/>
    </location>
    <ligand>
        <name>beta-D-fructose 1,6-bisphosphate</name>
        <dbReference type="ChEBI" id="CHEBI:32966"/>
        <note>ligand shared between dimeric partners</note>
    </ligand>
</feature>
<feature type="binding site" evidence="1">
    <location>
        <position position="286"/>
    </location>
    <ligand>
        <name>dihydroxyacetone phosphate</name>
        <dbReference type="ChEBI" id="CHEBI:57642"/>
    </ligand>
</feature>
<feature type="binding site" description="in other chain" evidence="1">
    <location>
        <position position="347"/>
    </location>
    <ligand>
        <name>beta-D-fructose 1,6-bisphosphate</name>
        <dbReference type="ChEBI" id="CHEBI:32966"/>
        <note>ligand shared between dimeric partners</note>
    </ligand>
</feature>
<protein>
    <recommendedName>
        <fullName evidence="5">Fructose-1,6-bisphosphate aldolase/phosphatase</fullName>
        <shortName evidence="2">FBP A/P</shortName>
        <shortName evidence="5">FBP aldolase/phosphatase</shortName>
        <ecNumber evidence="4">3.1.3.11</ecNumber>
        <ecNumber evidence="4">4.1.2.13</ecNumber>
    </recommendedName>
</protein>
<comment type="function">
    <text evidence="4">Catalyzes two subsequent steps in gluconeogenesis: the aldol condensation of dihydroxyacetone phosphate (DHAP) and glyceraldehyde-3-phosphate (GA3P) to fructose-1,6-bisphosphate (FBP), and the dephosphorylation of FBP to fructose-6-phosphate (F6P).</text>
</comment>
<comment type="catalytic activity">
    <reaction evidence="4">
        <text>beta-D-fructose 1,6-bisphosphate + H2O = beta-D-fructose 6-phosphate + phosphate</text>
        <dbReference type="Rhea" id="RHEA:11064"/>
        <dbReference type="ChEBI" id="CHEBI:15377"/>
        <dbReference type="ChEBI" id="CHEBI:32966"/>
        <dbReference type="ChEBI" id="CHEBI:43474"/>
        <dbReference type="ChEBI" id="CHEBI:57634"/>
        <dbReference type="EC" id="3.1.3.11"/>
    </reaction>
</comment>
<comment type="catalytic activity">
    <reaction evidence="4">
        <text>beta-D-fructose 1,6-bisphosphate = D-glyceraldehyde 3-phosphate + dihydroxyacetone phosphate</text>
        <dbReference type="Rhea" id="RHEA:14729"/>
        <dbReference type="ChEBI" id="CHEBI:32966"/>
        <dbReference type="ChEBI" id="CHEBI:57642"/>
        <dbReference type="ChEBI" id="CHEBI:59776"/>
        <dbReference type="EC" id="4.1.2.13"/>
    </reaction>
</comment>
<comment type="cofactor">
    <cofactor evidence="1">
        <name>Mg(2+)</name>
        <dbReference type="ChEBI" id="CHEBI:18420"/>
    </cofactor>
</comment>
<comment type="pathway">
    <text evidence="7">Carbohydrate biosynthesis; gluconeogenesis.</text>
</comment>
<comment type="subunit">
    <text evidence="1">Homooctamer; dimer of tetramers.</text>
</comment>
<comment type="domain">
    <text evidence="1">Consists of a single catalytic domain, but remodels its active-site architecture via a large structural change to exhibit dual activities.</text>
</comment>
<comment type="similarity">
    <text evidence="2 6">Belongs to the FBP aldolase/phosphatase family.</text>
</comment>
<organism>
    <name type="scientific">Metallosphaera sedula (strain ATCC 51363 / DSM 5348 / JCM 9185 / NBRC 15509 / TH2)</name>
    <dbReference type="NCBI Taxonomy" id="399549"/>
    <lineage>
        <taxon>Archaea</taxon>
        <taxon>Thermoproteota</taxon>
        <taxon>Thermoprotei</taxon>
        <taxon>Sulfolobales</taxon>
        <taxon>Sulfolobaceae</taxon>
        <taxon>Metallosphaera</taxon>
    </lineage>
</organism>
<sequence length="383" mass="42534">MRSTVSVIKADIGSLAGHHVVHPDTMAAANRVLAEAKRQGIILDYYITNVGDDLELIMSHTRGELDTKVHETAWDAFKEATKVSKELGLYAAGQDLLSDSFSGNLKGMGPGIAELDIEERPSEPIAIFMADKTEPGAFNLPLYKMFADPFNTAGLVIDPTMNEGFKFEVLDVYEGQSVVLNSPEEMYSLLGLIGTPARYVIRRVYRKADNMIGSVTSIERLNLIAGKYVGKDDPVLIVRLQHGFPALGEALEAFSFPYLVPGWMRGSHYGPIMPVSQRDAKATRFDGPPRLIGLGFNVKNGKLTGPSDLFDDPAFDETRRMASVITDYMRRHGPFMPHRLEPTEMEYTTLPTLIEKLKPRFKKEEDVKKAKPSVYTSKDQGMD</sequence>
<evidence type="ECO:0000250" key="1">
    <source>
        <dbReference type="UniProtKB" id="F9VMT6"/>
    </source>
</evidence>
<evidence type="ECO:0000255" key="2">
    <source>
        <dbReference type="HAMAP-Rule" id="MF_02067"/>
    </source>
</evidence>
<evidence type="ECO:0000256" key="3">
    <source>
        <dbReference type="SAM" id="MobiDB-lite"/>
    </source>
</evidence>
<evidence type="ECO:0000269" key="4">
    <source>
    </source>
</evidence>
<evidence type="ECO:0000303" key="5">
    <source>
    </source>
</evidence>
<evidence type="ECO:0000305" key="6"/>
<evidence type="ECO:0000305" key="7">
    <source>
    </source>
</evidence>
<evidence type="ECO:0000312" key="8">
    <source>
        <dbReference type="EMBL" id="ABP96397.1"/>
    </source>
</evidence>
<accession>A4YIZ5</accession>
<reference key="1">
    <citation type="journal article" date="2008" name="Appl. Environ. Microbiol.">
        <title>The genome sequence of the metal-mobilizing, extremely thermoacidophilic archaeon Metallosphaera sedula provides insights into bioleaching-associated metabolism.</title>
        <authorList>
            <person name="Auernik K.S."/>
            <person name="Maezato Y."/>
            <person name="Blum P.H."/>
            <person name="Kelly R.M."/>
        </authorList>
    </citation>
    <scope>NUCLEOTIDE SEQUENCE [LARGE SCALE GENOMIC DNA]</scope>
    <source>
        <strain>ATCC 51363 / DSM 5348 / JCM 9185 / NBRC 15509 / TH2</strain>
    </source>
</reference>
<reference key="2">
    <citation type="journal article" date="2010" name="Nature">
        <title>Fructose 1,6-bisphosphate aldolase/phosphatase may be an ancestral gluconeogenic enzyme.</title>
        <authorList>
            <person name="Say R.F."/>
            <person name="Fuchs G."/>
        </authorList>
    </citation>
    <scope>FUNCTION AS BOTH FBPASE AND FBP ALDOLASE</scope>
    <scope>CATALYTIC ACTIVITY</scope>
    <scope>PATHWAY</scope>
    <source>
        <strain>ATCC 51363 / DSM 5348 / JCM 9185 / NBRC 15509 / TH2</strain>
    </source>
</reference>
<keyword id="KW-0119">Carbohydrate metabolism</keyword>
<keyword id="KW-0312">Gluconeogenesis</keyword>
<keyword id="KW-0378">Hydrolase</keyword>
<keyword id="KW-0456">Lyase</keyword>
<keyword id="KW-0460">Magnesium</keyword>
<keyword id="KW-0479">Metal-binding</keyword>
<keyword id="KW-1185">Reference proteome</keyword>
<keyword id="KW-0704">Schiff base</keyword>
<gene>
    <name evidence="2" type="primary">fbp</name>
    <name evidence="8" type="ordered locus">Msed_2259</name>
</gene>